<proteinExistence type="inferred from homology"/>
<sequence>MSVSPVPIVSTPVAVSESPAGSPVQPAVPVTVRWRGSEAYETSFDAMRAFTDTRTADTGDEIWVVEHPPVYTLGQAGDPAHLLVADSGVPLVKVDRGGQITYHGPGQIVVYLLLDLRRRKLMVRTLVTKIEEAVIETLAAYNLASVRKAGAPGIYVASGVHEGAKIAALGLKIRNGCSYHGLSLNVKMDLRPFLAINPCGYAGLETVDMASLEVAADWNDVAHTLVGRLIANLDGESAAADKPQALEHSND</sequence>
<evidence type="ECO:0000255" key="1">
    <source>
        <dbReference type="HAMAP-Rule" id="MF_00013"/>
    </source>
</evidence>
<evidence type="ECO:0000255" key="2">
    <source>
        <dbReference type="PROSITE-ProRule" id="PRU01067"/>
    </source>
</evidence>
<accession>B1YNM7</accession>
<protein>
    <recommendedName>
        <fullName evidence="1">Octanoyltransferase</fullName>
        <ecNumber evidence="1">2.3.1.181</ecNumber>
    </recommendedName>
    <alternativeName>
        <fullName evidence="1">Lipoate-protein ligase B</fullName>
    </alternativeName>
    <alternativeName>
        <fullName evidence="1">Lipoyl/octanoyl transferase</fullName>
    </alternativeName>
    <alternativeName>
        <fullName evidence="1">Octanoyl-[acyl-carrier-protein]-protein N-octanoyltransferase</fullName>
    </alternativeName>
</protein>
<feature type="chain" id="PRO_1000089440" description="Octanoyltransferase">
    <location>
        <begin position="1"/>
        <end position="251"/>
    </location>
</feature>
<feature type="domain" description="BPL/LPL catalytic" evidence="2">
    <location>
        <begin position="56"/>
        <end position="237"/>
    </location>
</feature>
<feature type="active site" description="Acyl-thioester intermediate" evidence="1">
    <location>
        <position position="199"/>
    </location>
</feature>
<feature type="binding site" evidence="1">
    <location>
        <begin position="96"/>
        <end position="103"/>
    </location>
    <ligand>
        <name>substrate</name>
    </ligand>
</feature>
<feature type="binding site" evidence="1">
    <location>
        <begin position="168"/>
        <end position="170"/>
    </location>
    <ligand>
        <name>substrate</name>
    </ligand>
</feature>
<feature type="binding site" evidence="1">
    <location>
        <begin position="181"/>
        <end position="183"/>
    </location>
    <ligand>
        <name>substrate</name>
    </ligand>
</feature>
<feature type="site" description="Lowers pKa of active site Cys" evidence="1">
    <location>
        <position position="165"/>
    </location>
</feature>
<name>LIPB_BURA4</name>
<comment type="function">
    <text evidence="1">Catalyzes the transfer of endogenously produced octanoic acid from octanoyl-acyl-carrier-protein onto the lipoyl domains of lipoate-dependent enzymes. Lipoyl-ACP can also act as a substrate although octanoyl-ACP is likely to be the physiological substrate.</text>
</comment>
<comment type="catalytic activity">
    <reaction evidence="1">
        <text>octanoyl-[ACP] + L-lysyl-[protein] = N(6)-octanoyl-L-lysyl-[protein] + holo-[ACP] + H(+)</text>
        <dbReference type="Rhea" id="RHEA:17665"/>
        <dbReference type="Rhea" id="RHEA-COMP:9636"/>
        <dbReference type="Rhea" id="RHEA-COMP:9685"/>
        <dbReference type="Rhea" id="RHEA-COMP:9752"/>
        <dbReference type="Rhea" id="RHEA-COMP:9928"/>
        <dbReference type="ChEBI" id="CHEBI:15378"/>
        <dbReference type="ChEBI" id="CHEBI:29969"/>
        <dbReference type="ChEBI" id="CHEBI:64479"/>
        <dbReference type="ChEBI" id="CHEBI:78463"/>
        <dbReference type="ChEBI" id="CHEBI:78809"/>
        <dbReference type="EC" id="2.3.1.181"/>
    </reaction>
</comment>
<comment type="pathway">
    <text evidence="1">Protein modification; protein lipoylation via endogenous pathway; protein N(6)-(lipoyl)lysine from octanoyl-[acyl-carrier-protein]: step 1/2.</text>
</comment>
<comment type="subcellular location">
    <subcellularLocation>
        <location evidence="1">Cytoplasm</location>
    </subcellularLocation>
</comment>
<comment type="miscellaneous">
    <text evidence="1">In the reaction, the free carboxyl group of octanoic acid is attached via an amide linkage to the epsilon-amino group of a specific lysine residue of lipoyl domains of lipoate-dependent enzymes.</text>
</comment>
<comment type="similarity">
    <text evidence="1">Belongs to the LipB family.</text>
</comment>
<dbReference type="EC" id="2.3.1.181" evidence="1"/>
<dbReference type="EMBL" id="CP001025">
    <property type="protein sequence ID" value="ACB65277.1"/>
    <property type="molecule type" value="Genomic_DNA"/>
</dbReference>
<dbReference type="RefSeq" id="WP_012364793.1">
    <property type="nucleotide sequence ID" value="NC_010551.1"/>
</dbReference>
<dbReference type="SMR" id="B1YNM7"/>
<dbReference type="KEGG" id="bac:BamMC406_2800"/>
<dbReference type="HOGENOM" id="CLU_035168_3_1_4"/>
<dbReference type="OrthoDB" id="9787061at2"/>
<dbReference type="UniPathway" id="UPA00538">
    <property type="reaction ID" value="UER00592"/>
</dbReference>
<dbReference type="Proteomes" id="UP000001680">
    <property type="component" value="Chromosome 1"/>
</dbReference>
<dbReference type="GO" id="GO:0005737">
    <property type="term" value="C:cytoplasm"/>
    <property type="evidence" value="ECO:0007669"/>
    <property type="project" value="UniProtKB-SubCell"/>
</dbReference>
<dbReference type="GO" id="GO:0033819">
    <property type="term" value="F:lipoyl(octanoyl) transferase activity"/>
    <property type="evidence" value="ECO:0007669"/>
    <property type="project" value="UniProtKB-EC"/>
</dbReference>
<dbReference type="GO" id="GO:0036211">
    <property type="term" value="P:protein modification process"/>
    <property type="evidence" value="ECO:0007669"/>
    <property type="project" value="InterPro"/>
</dbReference>
<dbReference type="CDD" id="cd16444">
    <property type="entry name" value="LipB"/>
    <property type="match status" value="1"/>
</dbReference>
<dbReference type="FunFam" id="3.30.930.10:FF:000020">
    <property type="entry name" value="Octanoyltransferase"/>
    <property type="match status" value="1"/>
</dbReference>
<dbReference type="Gene3D" id="3.30.930.10">
    <property type="entry name" value="Bira Bifunctional Protein, Domain 2"/>
    <property type="match status" value="1"/>
</dbReference>
<dbReference type="HAMAP" id="MF_00013">
    <property type="entry name" value="LipB"/>
    <property type="match status" value="1"/>
</dbReference>
<dbReference type="InterPro" id="IPR045864">
    <property type="entry name" value="aa-tRNA-synth_II/BPL/LPL"/>
</dbReference>
<dbReference type="InterPro" id="IPR004143">
    <property type="entry name" value="BPL_LPL_catalytic"/>
</dbReference>
<dbReference type="InterPro" id="IPR000544">
    <property type="entry name" value="Octanoyltransferase"/>
</dbReference>
<dbReference type="InterPro" id="IPR020605">
    <property type="entry name" value="Octanoyltransferase_CS"/>
</dbReference>
<dbReference type="NCBIfam" id="TIGR00214">
    <property type="entry name" value="lipB"/>
    <property type="match status" value="1"/>
</dbReference>
<dbReference type="NCBIfam" id="NF010922">
    <property type="entry name" value="PRK14342.1"/>
    <property type="match status" value="1"/>
</dbReference>
<dbReference type="NCBIfam" id="NF010923">
    <property type="entry name" value="PRK14343.1"/>
    <property type="match status" value="1"/>
</dbReference>
<dbReference type="PANTHER" id="PTHR10993:SF7">
    <property type="entry name" value="LIPOYLTRANSFERASE 2, MITOCHONDRIAL-RELATED"/>
    <property type="match status" value="1"/>
</dbReference>
<dbReference type="PANTHER" id="PTHR10993">
    <property type="entry name" value="OCTANOYLTRANSFERASE"/>
    <property type="match status" value="1"/>
</dbReference>
<dbReference type="Pfam" id="PF21948">
    <property type="entry name" value="LplA-B_cat"/>
    <property type="match status" value="1"/>
</dbReference>
<dbReference type="PIRSF" id="PIRSF016262">
    <property type="entry name" value="LPLase"/>
    <property type="match status" value="1"/>
</dbReference>
<dbReference type="SUPFAM" id="SSF55681">
    <property type="entry name" value="Class II aaRS and biotin synthetases"/>
    <property type="match status" value="1"/>
</dbReference>
<dbReference type="PROSITE" id="PS51733">
    <property type="entry name" value="BPL_LPL_CATALYTIC"/>
    <property type="match status" value="1"/>
</dbReference>
<dbReference type="PROSITE" id="PS01313">
    <property type="entry name" value="LIPB"/>
    <property type="match status" value="1"/>
</dbReference>
<organism>
    <name type="scientific">Burkholderia ambifaria (strain MC40-6)</name>
    <dbReference type="NCBI Taxonomy" id="398577"/>
    <lineage>
        <taxon>Bacteria</taxon>
        <taxon>Pseudomonadati</taxon>
        <taxon>Pseudomonadota</taxon>
        <taxon>Betaproteobacteria</taxon>
        <taxon>Burkholderiales</taxon>
        <taxon>Burkholderiaceae</taxon>
        <taxon>Burkholderia</taxon>
        <taxon>Burkholderia cepacia complex</taxon>
    </lineage>
</organism>
<gene>
    <name evidence="1" type="primary">lipB</name>
    <name type="ordered locus">BamMC406_2800</name>
</gene>
<reference key="1">
    <citation type="submission" date="2008-04" db="EMBL/GenBank/DDBJ databases">
        <title>Complete sequence of chromosome 1 of Burkholderia ambifaria MC40-6.</title>
        <authorList>
            <person name="Copeland A."/>
            <person name="Lucas S."/>
            <person name="Lapidus A."/>
            <person name="Glavina del Rio T."/>
            <person name="Dalin E."/>
            <person name="Tice H."/>
            <person name="Pitluck S."/>
            <person name="Chain P."/>
            <person name="Malfatti S."/>
            <person name="Shin M."/>
            <person name="Vergez L."/>
            <person name="Lang D."/>
            <person name="Schmutz J."/>
            <person name="Larimer F."/>
            <person name="Land M."/>
            <person name="Hauser L."/>
            <person name="Kyrpides N."/>
            <person name="Lykidis A."/>
            <person name="Ramette A."/>
            <person name="Konstantinidis K."/>
            <person name="Tiedje J."/>
            <person name="Richardson P."/>
        </authorList>
    </citation>
    <scope>NUCLEOTIDE SEQUENCE [LARGE SCALE GENOMIC DNA]</scope>
    <source>
        <strain>MC40-6</strain>
    </source>
</reference>
<keyword id="KW-0012">Acyltransferase</keyword>
<keyword id="KW-0963">Cytoplasm</keyword>
<keyword id="KW-0808">Transferase</keyword>